<dbReference type="SMR" id="P01725"/>
<dbReference type="FunCoup" id="P01725">
    <property type="interactions" value="777"/>
</dbReference>
<dbReference type="InParanoid" id="P01725"/>
<dbReference type="Proteomes" id="UP000000589">
    <property type="component" value="Unplaced"/>
</dbReference>
<dbReference type="RNAct" id="P01725">
    <property type="molecule type" value="protein"/>
</dbReference>
<dbReference type="GO" id="GO:0019814">
    <property type="term" value="C:immunoglobulin complex"/>
    <property type="evidence" value="ECO:0000318"/>
    <property type="project" value="GO_Central"/>
</dbReference>
<dbReference type="GO" id="GO:0002250">
    <property type="term" value="P:adaptive immune response"/>
    <property type="evidence" value="ECO:0007669"/>
    <property type="project" value="UniProtKB-KW"/>
</dbReference>
<dbReference type="GO" id="GO:0006955">
    <property type="term" value="P:immune response"/>
    <property type="evidence" value="ECO:0000318"/>
    <property type="project" value="GO_Central"/>
</dbReference>
<dbReference type="CDD" id="cd04984">
    <property type="entry name" value="IgV_L_lambda"/>
    <property type="match status" value="1"/>
</dbReference>
<dbReference type="FunFam" id="2.60.40.10:FF:002073">
    <property type="entry name" value="Ig lambda-1 chain V regions MOPC 104E/RPC20/J558/S104"/>
    <property type="match status" value="1"/>
</dbReference>
<dbReference type="Gene3D" id="2.60.40.10">
    <property type="entry name" value="Immunoglobulins"/>
    <property type="match status" value="1"/>
</dbReference>
<dbReference type="InterPro" id="IPR007110">
    <property type="entry name" value="Ig-like_dom"/>
</dbReference>
<dbReference type="InterPro" id="IPR036179">
    <property type="entry name" value="Ig-like_dom_sf"/>
</dbReference>
<dbReference type="InterPro" id="IPR013783">
    <property type="entry name" value="Ig-like_fold"/>
</dbReference>
<dbReference type="InterPro" id="IPR003599">
    <property type="entry name" value="Ig_sub"/>
</dbReference>
<dbReference type="InterPro" id="IPR013106">
    <property type="entry name" value="Ig_V-set"/>
</dbReference>
<dbReference type="InterPro" id="IPR050150">
    <property type="entry name" value="IgV_Light_Chain"/>
</dbReference>
<dbReference type="PANTHER" id="PTHR23267">
    <property type="entry name" value="IMMUNOGLOBULIN LIGHT CHAIN"/>
    <property type="match status" value="1"/>
</dbReference>
<dbReference type="Pfam" id="PF07686">
    <property type="entry name" value="V-set"/>
    <property type="match status" value="1"/>
</dbReference>
<dbReference type="SMART" id="SM00409">
    <property type="entry name" value="IG"/>
    <property type="match status" value="1"/>
</dbReference>
<dbReference type="SMART" id="SM00406">
    <property type="entry name" value="IGv"/>
    <property type="match status" value="1"/>
</dbReference>
<dbReference type="SUPFAM" id="SSF48726">
    <property type="entry name" value="Immunoglobulin"/>
    <property type="match status" value="1"/>
</dbReference>
<dbReference type="PROSITE" id="PS50835">
    <property type="entry name" value="IG_LIKE"/>
    <property type="match status" value="1"/>
</dbReference>
<organism>
    <name type="scientific">Mus musculus</name>
    <name type="common">Mouse</name>
    <dbReference type="NCBI Taxonomy" id="10090"/>
    <lineage>
        <taxon>Eukaryota</taxon>
        <taxon>Metazoa</taxon>
        <taxon>Chordata</taxon>
        <taxon>Craniata</taxon>
        <taxon>Vertebrata</taxon>
        <taxon>Euteleostomi</taxon>
        <taxon>Mammalia</taxon>
        <taxon>Eutheria</taxon>
        <taxon>Euarchontoglires</taxon>
        <taxon>Glires</taxon>
        <taxon>Rodentia</taxon>
        <taxon>Myomorpha</taxon>
        <taxon>Muroidea</taxon>
        <taxon>Muridae</taxon>
        <taxon>Murinae</taxon>
        <taxon>Mus</taxon>
        <taxon>Mus</taxon>
    </lineage>
</organism>
<sequence length="110" mass="11654">QAVVTQESALTTSPGETVTLTCRSNTGAVTTSNYANWVQQKPDHLFTGLIGNTNNRAPGVPARFSGSLIGNKAALTITGAQTEDEAIYFCALWYSNRWVFGGGTKLTVLG</sequence>
<protein>
    <recommendedName>
        <fullName>Ig lambda-1 chain V region S178</fullName>
    </recommendedName>
</protein>
<name>LV1C_MOUSE</name>
<reference key="1">
    <citation type="journal article" date="1973" name="Proc. Natl. Acad. Sci. U.S.A.">
        <title>Mouse lambda-chain sequences.</title>
        <authorList>
            <person name="Cesari I.M."/>
            <person name="Weigert M."/>
        </authorList>
    </citation>
    <scope>PROTEIN SEQUENCE</scope>
</reference>
<proteinExistence type="evidence at protein level"/>
<accession>P01725</accession>
<keyword id="KW-1064">Adaptive immunity</keyword>
<keyword id="KW-0903">Direct protein sequencing</keyword>
<keyword id="KW-0391">Immunity</keyword>
<keyword id="KW-1280">Immunoglobulin</keyword>
<keyword id="KW-1185">Reference proteome</keyword>
<comment type="miscellaneous">
    <text>This protein was isolated from serum or urine of tumor-bearing mice.</text>
</comment>
<feature type="chain" id="PRO_0000059855" description="Ig lambda-1 chain V region S178">
    <location>
        <begin position="1"/>
        <end position="110" status="greater than"/>
    </location>
</feature>
<feature type="domain" description="Ig-like">
    <location>
        <begin position="1"/>
        <end position="106"/>
    </location>
</feature>
<feature type="non-terminal residue">
    <location>
        <position position="110"/>
    </location>
</feature>